<proteinExistence type="inferred from homology"/>
<reference key="1">
    <citation type="journal article" date="2003" name="Genome Res.">
        <title>Comparative complete genome sequence analysis of the amino acid replacements responsible for the thermostability of Corynebacterium efficiens.</title>
        <authorList>
            <person name="Nishio Y."/>
            <person name="Nakamura Y."/>
            <person name="Kawarabayasi Y."/>
            <person name="Usuda Y."/>
            <person name="Kimura E."/>
            <person name="Sugimoto S."/>
            <person name="Matsui K."/>
            <person name="Yamagishi A."/>
            <person name="Kikuchi H."/>
            <person name="Ikeo K."/>
            <person name="Gojobori T."/>
        </authorList>
    </citation>
    <scope>NUCLEOTIDE SEQUENCE [LARGE SCALE GENOMIC DNA]</scope>
    <source>
        <strain>DSM 44549 / YS-314 / AJ 12310 / JCM 11189 / NBRC 100395</strain>
    </source>
</reference>
<keyword id="KW-0004">4Fe-4S</keyword>
<keyword id="KW-0408">Iron</keyword>
<keyword id="KW-0411">Iron-sulfur</keyword>
<keyword id="KW-0456">Lyase</keyword>
<keyword id="KW-0479">Metal-binding</keyword>
<keyword id="KW-1185">Reference proteome</keyword>
<keyword id="KW-0949">S-adenosyl-L-methionine</keyword>
<keyword id="KW-0784">Thiamine biosynthesis</keyword>
<keyword id="KW-0862">Zinc</keyword>
<accession>Q8FPT3</accession>
<organism>
    <name type="scientific">Corynebacterium efficiens (strain DSM 44549 / YS-314 / AJ 12310 / JCM 11189 / NBRC 100395)</name>
    <dbReference type="NCBI Taxonomy" id="196164"/>
    <lineage>
        <taxon>Bacteria</taxon>
        <taxon>Bacillati</taxon>
        <taxon>Actinomycetota</taxon>
        <taxon>Actinomycetes</taxon>
        <taxon>Mycobacteriales</taxon>
        <taxon>Corynebacteriaceae</taxon>
        <taxon>Corynebacterium</taxon>
    </lineage>
</organism>
<protein>
    <recommendedName>
        <fullName evidence="1">Phosphomethylpyrimidine synthase</fullName>
        <ecNumber evidence="1">4.1.99.17</ecNumber>
    </recommendedName>
    <alternativeName>
        <fullName evidence="1">Hydroxymethylpyrimidine phosphate synthase</fullName>
        <shortName evidence="1">HMP-P synthase</shortName>
        <shortName evidence="1">HMP-phosphate synthase</shortName>
        <shortName evidence="1">HMPP synthase</shortName>
    </alternativeName>
    <alternativeName>
        <fullName evidence="1">Thiamine biosynthesis protein ThiC</fullName>
    </alternativeName>
</protein>
<feature type="chain" id="PRO_0000152800" description="Phosphomethylpyrimidine synthase">
    <location>
        <begin position="1"/>
        <end position="580"/>
    </location>
</feature>
<feature type="region of interest" description="Disordered" evidence="2">
    <location>
        <begin position="1"/>
        <end position="58"/>
    </location>
</feature>
<feature type="region of interest" description="Disordered" evidence="2">
    <location>
        <begin position="554"/>
        <end position="580"/>
    </location>
</feature>
<feature type="binding site" evidence="1">
    <location>
        <position position="180"/>
    </location>
    <ligand>
        <name>substrate</name>
    </ligand>
</feature>
<feature type="binding site" evidence="1">
    <location>
        <position position="209"/>
    </location>
    <ligand>
        <name>substrate</name>
    </ligand>
</feature>
<feature type="binding site" evidence="1">
    <location>
        <position position="238"/>
    </location>
    <ligand>
        <name>substrate</name>
    </ligand>
</feature>
<feature type="binding site" evidence="1">
    <location>
        <position position="274"/>
    </location>
    <ligand>
        <name>substrate</name>
    </ligand>
</feature>
<feature type="binding site" evidence="1">
    <location>
        <begin position="294"/>
        <end position="296"/>
    </location>
    <ligand>
        <name>substrate</name>
    </ligand>
</feature>
<feature type="binding site" evidence="1">
    <location>
        <begin position="335"/>
        <end position="338"/>
    </location>
    <ligand>
        <name>substrate</name>
    </ligand>
</feature>
<feature type="binding site" evidence="1">
    <location>
        <position position="374"/>
    </location>
    <ligand>
        <name>substrate</name>
    </ligand>
</feature>
<feature type="binding site" evidence="1">
    <location>
        <position position="378"/>
    </location>
    <ligand>
        <name>Zn(2+)</name>
        <dbReference type="ChEBI" id="CHEBI:29105"/>
    </ligand>
</feature>
<feature type="binding site" evidence="1">
    <location>
        <position position="401"/>
    </location>
    <ligand>
        <name>substrate</name>
    </ligand>
</feature>
<feature type="binding site" evidence="1">
    <location>
        <position position="442"/>
    </location>
    <ligand>
        <name>Zn(2+)</name>
        <dbReference type="ChEBI" id="CHEBI:29105"/>
    </ligand>
</feature>
<feature type="binding site" evidence="1">
    <location>
        <position position="522"/>
    </location>
    <ligand>
        <name>[4Fe-4S] cluster</name>
        <dbReference type="ChEBI" id="CHEBI:49883"/>
        <note>4Fe-4S-S-AdoMet</note>
    </ligand>
</feature>
<feature type="binding site" evidence="1">
    <location>
        <position position="525"/>
    </location>
    <ligand>
        <name>[4Fe-4S] cluster</name>
        <dbReference type="ChEBI" id="CHEBI:49883"/>
        <note>4Fe-4S-S-AdoMet</note>
    </ligand>
</feature>
<feature type="binding site" evidence="1">
    <location>
        <position position="530"/>
    </location>
    <ligand>
        <name>[4Fe-4S] cluster</name>
        <dbReference type="ChEBI" id="CHEBI:49883"/>
        <note>4Fe-4S-S-AdoMet</note>
    </ligand>
</feature>
<dbReference type="EC" id="4.1.99.17" evidence="1"/>
<dbReference type="EMBL" id="BA000035">
    <property type="protein sequence ID" value="BAC18217.1"/>
    <property type="status" value="ALT_INIT"/>
    <property type="molecule type" value="Genomic_DNA"/>
</dbReference>
<dbReference type="RefSeq" id="WP_006769370.1">
    <property type="nucleotide sequence ID" value="NC_004369.1"/>
</dbReference>
<dbReference type="SMR" id="Q8FPT3"/>
<dbReference type="STRING" id="196164.gene:10741819"/>
<dbReference type="KEGG" id="cef:CE1407"/>
<dbReference type="eggNOG" id="COG0422">
    <property type="taxonomic scope" value="Bacteria"/>
</dbReference>
<dbReference type="HOGENOM" id="CLU_013181_2_1_11"/>
<dbReference type="OrthoDB" id="9805897at2"/>
<dbReference type="UniPathway" id="UPA00060"/>
<dbReference type="Proteomes" id="UP000001409">
    <property type="component" value="Chromosome"/>
</dbReference>
<dbReference type="GO" id="GO:0005829">
    <property type="term" value="C:cytosol"/>
    <property type="evidence" value="ECO:0007669"/>
    <property type="project" value="TreeGrafter"/>
</dbReference>
<dbReference type="GO" id="GO:0051539">
    <property type="term" value="F:4 iron, 4 sulfur cluster binding"/>
    <property type="evidence" value="ECO:0007669"/>
    <property type="project" value="UniProtKB-KW"/>
</dbReference>
<dbReference type="GO" id="GO:0016830">
    <property type="term" value="F:carbon-carbon lyase activity"/>
    <property type="evidence" value="ECO:0007669"/>
    <property type="project" value="InterPro"/>
</dbReference>
<dbReference type="GO" id="GO:0008270">
    <property type="term" value="F:zinc ion binding"/>
    <property type="evidence" value="ECO:0007669"/>
    <property type="project" value="UniProtKB-UniRule"/>
</dbReference>
<dbReference type="GO" id="GO:0009228">
    <property type="term" value="P:thiamine biosynthetic process"/>
    <property type="evidence" value="ECO:0007669"/>
    <property type="project" value="UniProtKB-KW"/>
</dbReference>
<dbReference type="GO" id="GO:0009229">
    <property type="term" value="P:thiamine diphosphate biosynthetic process"/>
    <property type="evidence" value="ECO:0007669"/>
    <property type="project" value="UniProtKB-UniRule"/>
</dbReference>
<dbReference type="FunFam" id="3.20.20.540:FF:000001">
    <property type="entry name" value="Phosphomethylpyrimidine synthase"/>
    <property type="match status" value="1"/>
</dbReference>
<dbReference type="Gene3D" id="6.10.250.620">
    <property type="match status" value="1"/>
</dbReference>
<dbReference type="Gene3D" id="3.20.20.540">
    <property type="entry name" value="Radical SAM ThiC family, central domain"/>
    <property type="match status" value="1"/>
</dbReference>
<dbReference type="HAMAP" id="MF_00089">
    <property type="entry name" value="ThiC"/>
    <property type="match status" value="1"/>
</dbReference>
<dbReference type="InterPro" id="IPR037509">
    <property type="entry name" value="ThiC"/>
</dbReference>
<dbReference type="InterPro" id="IPR025747">
    <property type="entry name" value="ThiC-associated_dom"/>
</dbReference>
<dbReference type="InterPro" id="IPR038521">
    <property type="entry name" value="ThiC/Bza_core_dom"/>
</dbReference>
<dbReference type="InterPro" id="IPR002817">
    <property type="entry name" value="ThiC/BzaA/B"/>
</dbReference>
<dbReference type="NCBIfam" id="NF006763">
    <property type="entry name" value="PRK09284.1"/>
    <property type="match status" value="1"/>
</dbReference>
<dbReference type="NCBIfam" id="NF009895">
    <property type="entry name" value="PRK13352.1"/>
    <property type="match status" value="1"/>
</dbReference>
<dbReference type="NCBIfam" id="TIGR00190">
    <property type="entry name" value="thiC"/>
    <property type="match status" value="1"/>
</dbReference>
<dbReference type="PANTHER" id="PTHR30557:SF1">
    <property type="entry name" value="PHOSPHOMETHYLPYRIMIDINE SYNTHASE, CHLOROPLASTIC"/>
    <property type="match status" value="1"/>
</dbReference>
<dbReference type="PANTHER" id="PTHR30557">
    <property type="entry name" value="THIAMINE BIOSYNTHESIS PROTEIN THIC"/>
    <property type="match status" value="1"/>
</dbReference>
<dbReference type="Pfam" id="PF13667">
    <property type="entry name" value="ThiC-associated"/>
    <property type="match status" value="1"/>
</dbReference>
<dbReference type="Pfam" id="PF01964">
    <property type="entry name" value="ThiC_Rad_SAM"/>
    <property type="match status" value="1"/>
</dbReference>
<dbReference type="SFLD" id="SFLDF00407">
    <property type="entry name" value="phosphomethylpyrimidine_syntha"/>
    <property type="match status" value="1"/>
</dbReference>
<dbReference type="SFLD" id="SFLDG01114">
    <property type="entry name" value="phosphomethylpyrimidine_syntha"/>
    <property type="match status" value="1"/>
</dbReference>
<dbReference type="SFLD" id="SFLDS00113">
    <property type="entry name" value="Radical_SAM_Phosphomethylpyrim"/>
    <property type="match status" value="1"/>
</dbReference>
<comment type="function">
    <text evidence="1">Catalyzes the synthesis of the hydroxymethylpyrimidine phosphate (HMP-P) moiety of thiamine from aminoimidazole ribotide (AIR) in a radical S-adenosyl-L-methionine (SAM)-dependent reaction.</text>
</comment>
<comment type="catalytic activity">
    <reaction evidence="1">
        <text>5-amino-1-(5-phospho-beta-D-ribosyl)imidazole + S-adenosyl-L-methionine = 4-amino-2-methyl-5-(phosphooxymethyl)pyrimidine + CO + 5'-deoxyadenosine + formate + L-methionine + 3 H(+)</text>
        <dbReference type="Rhea" id="RHEA:24840"/>
        <dbReference type="ChEBI" id="CHEBI:15378"/>
        <dbReference type="ChEBI" id="CHEBI:15740"/>
        <dbReference type="ChEBI" id="CHEBI:17245"/>
        <dbReference type="ChEBI" id="CHEBI:17319"/>
        <dbReference type="ChEBI" id="CHEBI:57844"/>
        <dbReference type="ChEBI" id="CHEBI:58354"/>
        <dbReference type="ChEBI" id="CHEBI:59789"/>
        <dbReference type="ChEBI" id="CHEBI:137981"/>
        <dbReference type="EC" id="4.1.99.17"/>
    </reaction>
</comment>
<comment type="cofactor">
    <cofactor evidence="1">
        <name>[4Fe-4S] cluster</name>
        <dbReference type="ChEBI" id="CHEBI:49883"/>
    </cofactor>
    <text evidence="1">Binds 1 [4Fe-4S] cluster per subunit. The cluster is coordinated with 3 cysteines and an exchangeable S-adenosyl-L-methionine.</text>
</comment>
<comment type="pathway">
    <text evidence="1">Cofactor biosynthesis; thiamine diphosphate biosynthesis.</text>
</comment>
<comment type="similarity">
    <text evidence="1">Belongs to the ThiC family.</text>
</comment>
<comment type="sequence caution" evidence="3">
    <conflict type="erroneous initiation">
        <sequence resource="EMBL-CDS" id="BAC18217"/>
    </conflict>
</comment>
<evidence type="ECO:0000255" key="1">
    <source>
        <dbReference type="HAMAP-Rule" id="MF_00089"/>
    </source>
</evidence>
<evidence type="ECO:0000256" key="2">
    <source>
        <dbReference type="SAM" id="MobiDB-lite"/>
    </source>
</evidence>
<evidence type="ECO:0000305" key="3"/>
<sequence>MTPTQNEIHPKHSYSPIRKHGLEVPETEIALDDSPSGPNEPFRIYRTRGPETDPTLGLPRLRTPWITARGDVTEYTGRERLLIDDGRSAMRRGQASAEWKGQKPAPLKALPGKRVTQMAYARAGEITREMEFVALREHVDPEFVRSEVARGRAIIPNNVNHPESEPMIIGRKFLTKINANIGNSAVTSSIEEEVSKLQWATRWGADTVMDLSTGDDIHTTREWIIRNSPVPIGTVPIYQALEKVNGVAADLSWEVFRDTVIEQCEQGVDYMTIHAGVLLAYIPLTTRRVTGIVSRGGSIMAGWCLAHHRESFLFEHFDELCEIFAQYDVAFSLGDGLRPGSLADANDAAQFAELKTIGELTQRAWEYDVQVMVEGPGHVPLNMIQENNELEQKWAADAPFYTLGPLVTDIAPGYDHITSAIGAAHIAMGGTAMLCYVTPKEHLGLPNRNDVKTGVITYKLAAHAADVAKGHPGARAWDDAMSKARFEFRWNDQFALSLDPDTAIAYHDETLPAEPAKTAHFCSMCGPKFCSMRISQDIRDMFGEQIAELGMPGVGASDSTEGMKEKSREFVAGGGEVYRE</sequence>
<gene>
    <name evidence="1" type="primary">thiC</name>
    <name type="ordered locus">CE1407</name>
</gene>
<name>THIC_COREF</name>